<protein>
    <recommendedName>
        <fullName evidence="1">DNA-directed RNA polymerase subunit beta</fullName>
        <shortName evidence="1">RNAP subunit beta</shortName>
        <ecNumber evidence="1">2.7.7.6</ecNumber>
    </recommendedName>
    <alternativeName>
        <fullName evidence="1">RNA polymerase subunit beta</fullName>
    </alternativeName>
    <alternativeName>
        <fullName evidence="1">Transcriptase subunit beta</fullName>
    </alternativeName>
</protein>
<sequence>MVYSYTEKKRIRKDFGTRPQVLDIPYLLSIQLDSFEKFIEQDPEGQYGLEAAFRSVFPIQSYNGNSELQYVSYRLGEPVFDVKECQIRGVTYSKPLRVKLRLVIFDKDAPAGTVKDIKEQEVYMGEIPLMTENGTFVINGTERVIVSQLHRSPGVFFDSDKGKTHSSGKVLYNARIIPYRGSWLDFEFDPKDNLYVRIDRRRKLPASIILRALGKTSAEILDIFFEKVNFEVKDQTLMMELVPERLRGETATFDIEADGKVYVEKGRRVTARHIRQLEKDGVNFIEVPVEYIVGKVSAKDYVNEATGELIITANQEISLEALANLSQAGYKKLEVLFTNDLDHGPFMSETLRVDSTTDRISALVEIYRMMRPGEPPTKEAAESLFESLFFSAERYDLSTVGRMKFNSSIGREDAEEQGTLDEVDIIEVMKKLISIRNGKGEVDDIDHLGNRRIRSVGEMAENQFRVGLVRVERAVKERLSLGDLDNVMPQDLINAKPISAAVKEFFGSSQLSQFMDQNNPLSEVTHKRRISALGPGGLTRERAGFEVRDVHVTHYGRLCPIETPEGPNIGLINSLSAFARCNEYGFLETPYRRVVNGVVTDEVDYLSAIEEGQFVIAQANAKLTEEGGFADELVTARQKGESGLHPREHVDYMDVATNQVVSIAASLIPFLEHDDANRALMGANMQRQAVPTLRSEKPLVGTGIERNVAVDSGVTAVAKRGGVIQSVDASRIVVKVNEEELIPGEAGIDIYNLTKYTRSNQNTCINQRPCVMPGEPVARGDVLADGPSTDLGELALGQNMRIAFMPWNGYNFEDSILVSERVVQDDRFTTIHIQELSCVARDTKLGAEEITADIPNVGEAALSKLDESGIVYIGAEVKGGDILVGKVTPKGETQLTPEEKLLRAIFGEKASDVKDTSLRVPNSVAGTVIDVQVFTRDGVEKDKRALEIEQMQLKEAKKDLTEEFQILEGGLLARVRSVLLAGGYTEAKLGSIERKKWLEQTLENEELQNQLEQLAEQYDELKADFDKKFEAKRRKITQGDDLAPGVLKIVKVYLAVKRRIQPGDKMAGRHGNKGVISKINPVEDMPYDENGQPVDIVLNPLGVPSRMNIGQILEVHLGLAAKGIGDKINQMIKEQQELAKLREFLQKVYDLGDTRQRVDISELSDEDVRTLAHNLRAGLPVATPVFDGAPESSIKAMLELADLPASGQLTLFDGRTGDAFERPVTVGYMYMLKLNHLVDDKMHARSTGSYSLVTQQPLGGKAQFGGQRFGEMEVWALEAYGAAYTLQEMLTVKSDDVNGRTKMYKNIVDGNHAMEPGMPESFNVLLKEIRSLGINIELEDE</sequence>
<reference key="1">
    <citation type="journal article" date="2000" name="Nature">
        <title>DNA sequence of both chromosomes of the cholera pathogen Vibrio cholerae.</title>
        <authorList>
            <person name="Heidelberg J.F."/>
            <person name="Eisen J.A."/>
            <person name="Nelson W.C."/>
            <person name="Clayton R.A."/>
            <person name="Gwinn M.L."/>
            <person name="Dodson R.J."/>
            <person name="Haft D.H."/>
            <person name="Hickey E.K."/>
            <person name="Peterson J.D."/>
            <person name="Umayam L.A."/>
            <person name="Gill S.R."/>
            <person name="Nelson K.E."/>
            <person name="Read T.D."/>
            <person name="Tettelin H."/>
            <person name="Richardson D.L."/>
            <person name="Ermolaeva M.D."/>
            <person name="Vamathevan J.J."/>
            <person name="Bass S."/>
            <person name="Qin H."/>
            <person name="Dragoi I."/>
            <person name="Sellers P."/>
            <person name="McDonald L.A."/>
            <person name="Utterback T.R."/>
            <person name="Fleischmann R.D."/>
            <person name="Nierman W.C."/>
            <person name="White O."/>
            <person name="Salzberg S.L."/>
            <person name="Smith H.O."/>
            <person name="Colwell R.R."/>
            <person name="Mekalanos J.J."/>
            <person name="Venter J.C."/>
            <person name="Fraser C.M."/>
        </authorList>
    </citation>
    <scope>NUCLEOTIDE SEQUENCE [LARGE SCALE GENOMIC DNA]</scope>
    <source>
        <strain>ATCC 39315 / El Tor Inaba N16961</strain>
    </source>
</reference>
<keyword id="KW-0002">3D-structure</keyword>
<keyword id="KW-0240">DNA-directed RNA polymerase</keyword>
<keyword id="KW-0548">Nucleotidyltransferase</keyword>
<keyword id="KW-1185">Reference proteome</keyword>
<keyword id="KW-0804">Transcription</keyword>
<keyword id="KW-0808">Transferase</keyword>
<accession>Q9KV30</accession>
<feature type="chain" id="PRO_0000047992" description="DNA-directed RNA polymerase subunit beta">
    <location>
        <begin position="1"/>
        <end position="1341"/>
    </location>
</feature>
<feature type="strand" evidence="3">
    <location>
        <begin position="228"/>
        <end position="241"/>
    </location>
</feature>
<feature type="helix" evidence="3">
    <location>
        <begin position="243"/>
        <end position="246"/>
    </location>
</feature>
<feature type="strand" evidence="3">
    <location>
        <begin position="255"/>
        <end position="257"/>
    </location>
</feature>
<feature type="strand" evidence="3">
    <location>
        <begin position="260"/>
        <end position="263"/>
    </location>
</feature>
<feature type="helix" evidence="3">
    <location>
        <begin position="271"/>
        <end position="279"/>
    </location>
</feature>
<feature type="strand" evidence="3">
    <location>
        <begin position="284"/>
        <end position="287"/>
    </location>
</feature>
<feature type="helix" evidence="3">
    <location>
        <begin position="289"/>
        <end position="293"/>
    </location>
</feature>
<feature type="strand" evidence="3">
    <location>
        <begin position="308"/>
        <end position="317"/>
    </location>
</feature>
<feature type="helix" evidence="3">
    <location>
        <begin position="319"/>
        <end position="327"/>
    </location>
</feature>
<gene>
    <name evidence="1" type="primary">rpoB</name>
    <name type="ordered locus">VC_0328</name>
</gene>
<dbReference type="EC" id="2.7.7.6" evidence="1"/>
<dbReference type="EMBL" id="AE003852">
    <property type="protein sequence ID" value="AAF93501.1"/>
    <property type="status" value="ALT_INIT"/>
    <property type="molecule type" value="Genomic_DNA"/>
</dbReference>
<dbReference type="PIR" id="F82336">
    <property type="entry name" value="F82336"/>
</dbReference>
<dbReference type="RefSeq" id="NP_229982.2">
    <property type="nucleotide sequence ID" value="NC_002505.1"/>
</dbReference>
<dbReference type="RefSeq" id="WP_000263118.1">
    <property type="nucleotide sequence ID" value="NZ_LT906614.1"/>
</dbReference>
<dbReference type="PDB" id="3E7H">
    <property type="method" value="X-ray"/>
    <property type="resolution" value="1.70 A"/>
    <property type="chains" value="A/B=228-329"/>
</dbReference>
<dbReference type="PDBsum" id="3E7H"/>
<dbReference type="SMR" id="Q9KV30"/>
<dbReference type="STRING" id="243277.VC_0328"/>
<dbReference type="DNASU" id="2615094"/>
<dbReference type="EnsemblBacteria" id="AAF93501">
    <property type="protein sequence ID" value="AAF93501"/>
    <property type="gene ID" value="VC_0328"/>
</dbReference>
<dbReference type="GeneID" id="69720937"/>
<dbReference type="KEGG" id="vch:VC_0328"/>
<dbReference type="PATRIC" id="fig|243277.26.peg.305"/>
<dbReference type="eggNOG" id="COG0085">
    <property type="taxonomic scope" value="Bacteria"/>
</dbReference>
<dbReference type="HOGENOM" id="CLU_000524_4_3_6"/>
<dbReference type="EvolutionaryTrace" id="Q9KV30"/>
<dbReference type="Proteomes" id="UP000000584">
    <property type="component" value="Chromosome 1"/>
</dbReference>
<dbReference type="GO" id="GO:0000428">
    <property type="term" value="C:DNA-directed RNA polymerase complex"/>
    <property type="evidence" value="ECO:0007669"/>
    <property type="project" value="UniProtKB-KW"/>
</dbReference>
<dbReference type="GO" id="GO:0003677">
    <property type="term" value="F:DNA binding"/>
    <property type="evidence" value="ECO:0007669"/>
    <property type="project" value="UniProtKB-UniRule"/>
</dbReference>
<dbReference type="GO" id="GO:0003899">
    <property type="term" value="F:DNA-directed RNA polymerase activity"/>
    <property type="evidence" value="ECO:0007669"/>
    <property type="project" value="UniProtKB-UniRule"/>
</dbReference>
<dbReference type="GO" id="GO:0032549">
    <property type="term" value="F:ribonucleoside binding"/>
    <property type="evidence" value="ECO:0007669"/>
    <property type="project" value="InterPro"/>
</dbReference>
<dbReference type="GO" id="GO:0006351">
    <property type="term" value="P:DNA-templated transcription"/>
    <property type="evidence" value="ECO:0007669"/>
    <property type="project" value="UniProtKB-UniRule"/>
</dbReference>
<dbReference type="CDD" id="cd00653">
    <property type="entry name" value="RNA_pol_B_RPB2"/>
    <property type="match status" value="1"/>
</dbReference>
<dbReference type="FunFam" id="2.30.150.10:FF:000001">
    <property type="entry name" value="DNA-directed RNA polymerase subunit beta"/>
    <property type="match status" value="1"/>
</dbReference>
<dbReference type="FunFam" id="2.40.270.10:FF:000003">
    <property type="entry name" value="DNA-directed RNA polymerase subunit beta"/>
    <property type="match status" value="1"/>
</dbReference>
<dbReference type="FunFam" id="2.40.270.10:FF:000004">
    <property type="entry name" value="DNA-directed RNA polymerase subunit beta"/>
    <property type="match status" value="1"/>
</dbReference>
<dbReference type="FunFam" id="2.40.50.100:FF:000006">
    <property type="entry name" value="DNA-directed RNA polymerase subunit beta"/>
    <property type="match status" value="1"/>
</dbReference>
<dbReference type="FunFam" id="2.40.50.150:FF:000001">
    <property type="entry name" value="DNA-directed RNA polymerase subunit beta"/>
    <property type="match status" value="1"/>
</dbReference>
<dbReference type="FunFam" id="3.90.1100.10:FF:000002">
    <property type="entry name" value="DNA-directed RNA polymerase subunit beta"/>
    <property type="match status" value="1"/>
</dbReference>
<dbReference type="FunFam" id="3.90.1110.10:FF:000001">
    <property type="entry name" value="DNA-directed RNA polymerase subunit beta"/>
    <property type="match status" value="1"/>
</dbReference>
<dbReference type="FunFam" id="3.90.1110.10:FF:000004">
    <property type="entry name" value="DNA-directed RNA polymerase subunit beta"/>
    <property type="match status" value="1"/>
</dbReference>
<dbReference type="FunFam" id="3.90.1800.10:FF:000001">
    <property type="entry name" value="DNA-directed RNA polymerase subunit beta"/>
    <property type="match status" value="1"/>
</dbReference>
<dbReference type="Gene3D" id="2.40.50.100">
    <property type="match status" value="1"/>
</dbReference>
<dbReference type="Gene3D" id="2.40.50.150">
    <property type="match status" value="1"/>
</dbReference>
<dbReference type="Gene3D" id="3.90.1100.10">
    <property type="match status" value="2"/>
</dbReference>
<dbReference type="Gene3D" id="2.30.150.10">
    <property type="entry name" value="DNA-directed RNA polymerase, beta subunit, external 1 domain"/>
    <property type="match status" value="1"/>
</dbReference>
<dbReference type="Gene3D" id="2.40.270.10">
    <property type="entry name" value="DNA-directed RNA polymerase, subunit 2, domain 6"/>
    <property type="match status" value="1"/>
</dbReference>
<dbReference type="Gene3D" id="3.90.1800.10">
    <property type="entry name" value="RNA polymerase alpha subunit dimerisation domain"/>
    <property type="match status" value="1"/>
</dbReference>
<dbReference type="HAMAP" id="MF_01321">
    <property type="entry name" value="RNApol_bact_RpoB"/>
    <property type="match status" value="1"/>
</dbReference>
<dbReference type="InterPro" id="IPR042107">
    <property type="entry name" value="DNA-dir_RNA_pol_bsu_ext_1_sf"/>
</dbReference>
<dbReference type="InterPro" id="IPR019462">
    <property type="entry name" value="DNA-dir_RNA_pol_bsu_external_1"/>
</dbReference>
<dbReference type="InterPro" id="IPR015712">
    <property type="entry name" value="DNA-dir_RNA_pol_su2"/>
</dbReference>
<dbReference type="InterPro" id="IPR007120">
    <property type="entry name" value="DNA-dir_RNAP_su2_dom"/>
</dbReference>
<dbReference type="InterPro" id="IPR037033">
    <property type="entry name" value="DNA-dir_RNAP_su2_hyb_sf"/>
</dbReference>
<dbReference type="InterPro" id="IPR010243">
    <property type="entry name" value="RNA_pol_bsu_bac"/>
</dbReference>
<dbReference type="InterPro" id="IPR007121">
    <property type="entry name" value="RNA_pol_bsu_CS"/>
</dbReference>
<dbReference type="InterPro" id="IPR007644">
    <property type="entry name" value="RNA_pol_bsu_protrusion"/>
</dbReference>
<dbReference type="InterPro" id="IPR007642">
    <property type="entry name" value="RNA_pol_Rpb2_2"/>
</dbReference>
<dbReference type="InterPro" id="IPR007645">
    <property type="entry name" value="RNA_pol_Rpb2_3"/>
</dbReference>
<dbReference type="InterPro" id="IPR007641">
    <property type="entry name" value="RNA_pol_Rpb2_7"/>
</dbReference>
<dbReference type="InterPro" id="IPR014724">
    <property type="entry name" value="RNA_pol_RPB2_OB-fold"/>
</dbReference>
<dbReference type="NCBIfam" id="NF001616">
    <property type="entry name" value="PRK00405.1"/>
    <property type="match status" value="1"/>
</dbReference>
<dbReference type="NCBIfam" id="TIGR02013">
    <property type="entry name" value="rpoB"/>
    <property type="match status" value="1"/>
</dbReference>
<dbReference type="PANTHER" id="PTHR20856">
    <property type="entry name" value="DNA-DIRECTED RNA POLYMERASE I SUBUNIT 2"/>
    <property type="match status" value="1"/>
</dbReference>
<dbReference type="Pfam" id="PF04563">
    <property type="entry name" value="RNA_pol_Rpb2_1"/>
    <property type="match status" value="1"/>
</dbReference>
<dbReference type="Pfam" id="PF04561">
    <property type="entry name" value="RNA_pol_Rpb2_2"/>
    <property type="match status" value="2"/>
</dbReference>
<dbReference type="Pfam" id="PF04565">
    <property type="entry name" value="RNA_pol_Rpb2_3"/>
    <property type="match status" value="1"/>
</dbReference>
<dbReference type="Pfam" id="PF10385">
    <property type="entry name" value="RNA_pol_Rpb2_45"/>
    <property type="match status" value="1"/>
</dbReference>
<dbReference type="Pfam" id="PF00562">
    <property type="entry name" value="RNA_pol_Rpb2_6"/>
    <property type="match status" value="1"/>
</dbReference>
<dbReference type="Pfam" id="PF04560">
    <property type="entry name" value="RNA_pol_Rpb2_7"/>
    <property type="match status" value="1"/>
</dbReference>
<dbReference type="SUPFAM" id="SSF64484">
    <property type="entry name" value="beta and beta-prime subunits of DNA dependent RNA-polymerase"/>
    <property type="match status" value="1"/>
</dbReference>
<dbReference type="PROSITE" id="PS01166">
    <property type="entry name" value="RNA_POL_BETA"/>
    <property type="match status" value="1"/>
</dbReference>
<comment type="function">
    <text evidence="1">DNA-dependent RNA polymerase catalyzes the transcription of DNA into RNA using the four ribonucleoside triphosphates as substrates.</text>
</comment>
<comment type="catalytic activity">
    <reaction evidence="1">
        <text>RNA(n) + a ribonucleoside 5'-triphosphate = RNA(n+1) + diphosphate</text>
        <dbReference type="Rhea" id="RHEA:21248"/>
        <dbReference type="Rhea" id="RHEA-COMP:14527"/>
        <dbReference type="Rhea" id="RHEA-COMP:17342"/>
        <dbReference type="ChEBI" id="CHEBI:33019"/>
        <dbReference type="ChEBI" id="CHEBI:61557"/>
        <dbReference type="ChEBI" id="CHEBI:140395"/>
        <dbReference type="EC" id="2.7.7.6"/>
    </reaction>
</comment>
<comment type="subunit">
    <text evidence="1">The RNAP catalytic core consists of 2 alpha, 1 beta, 1 beta' and 1 omega subunit. When a sigma factor is associated with the core the holoenzyme is formed, which can initiate transcription.</text>
</comment>
<comment type="similarity">
    <text evidence="1">Belongs to the RNA polymerase beta chain family.</text>
</comment>
<comment type="sequence caution" evidence="2">
    <conflict type="erroneous initiation">
        <sequence resource="EMBL-CDS" id="AAF93501"/>
    </conflict>
</comment>
<evidence type="ECO:0000255" key="1">
    <source>
        <dbReference type="HAMAP-Rule" id="MF_01321"/>
    </source>
</evidence>
<evidence type="ECO:0000305" key="2"/>
<evidence type="ECO:0007829" key="3">
    <source>
        <dbReference type="PDB" id="3E7H"/>
    </source>
</evidence>
<organism>
    <name type="scientific">Vibrio cholerae serotype O1 (strain ATCC 39315 / El Tor Inaba N16961)</name>
    <dbReference type="NCBI Taxonomy" id="243277"/>
    <lineage>
        <taxon>Bacteria</taxon>
        <taxon>Pseudomonadati</taxon>
        <taxon>Pseudomonadota</taxon>
        <taxon>Gammaproteobacteria</taxon>
        <taxon>Vibrionales</taxon>
        <taxon>Vibrionaceae</taxon>
        <taxon>Vibrio</taxon>
    </lineage>
</organism>
<name>RPOB_VIBCH</name>
<proteinExistence type="evidence at protein level"/>